<organism>
    <name type="scientific">Saccharomyces cerevisiae (strain YJM789)</name>
    <name type="common">Baker's yeast</name>
    <dbReference type="NCBI Taxonomy" id="307796"/>
    <lineage>
        <taxon>Eukaryota</taxon>
        <taxon>Fungi</taxon>
        <taxon>Dikarya</taxon>
        <taxon>Ascomycota</taxon>
        <taxon>Saccharomycotina</taxon>
        <taxon>Saccharomycetes</taxon>
        <taxon>Saccharomycetales</taxon>
        <taxon>Saccharomycetaceae</taxon>
        <taxon>Saccharomyces</taxon>
    </lineage>
</organism>
<feature type="chain" id="PRO_0000330072" description="Mitochondrial inner membrane protease ATP23">
    <location>
        <begin position="1"/>
        <end position="227"/>
    </location>
</feature>
<feature type="active site" evidence="2">
    <location>
        <position position="125"/>
    </location>
</feature>
<feature type="binding site" evidence="1">
    <location>
        <position position="124"/>
    </location>
    <ligand>
        <name>a divalent metal cation</name>
        <dbReference type="ChEBI" id="CHEBI:60240"/>
        <note>catalytic</note>
    </ligand>
</feature>
<feature type="binding site" evidence="1">
    <location>
        <position position="128"/>
    </location>
    <ligand>
        <name>a divalent metal cation</name>
        <dbReference type="ChEBI" id="CHEBI:60240"/>
        <note>catalytic</note>
    </ligand>
</feature>
<reference key="1">
    <citation type="journal article" date="2007" name="Proc. Natl. Acad. Sci. U.S.A.">
        <title>Genome sequencing and comparative analysis of Saccharomyces cerevisiae strain YJM789.</title>
        <authorList>
            <person name="Wei W."/>
            <person name="McCusker J.H."/>
            <person name="Hyman R.W."/>
            <person name="Jones T."/>
            <person name="Ning Y."/>
            <person name="Cao Z."/>
            <person name="Gu Z."/>
            <person name="Bruno D."/>
            <person name="Miranda M."/>
            <person name="Nguyen M."/>
            <person name="Wilhelmy J."/>
            <person name="Komp C."/>
            <person name="Tamse R."/>
            <person name="Wang X."/>
            <person name="Jia P."/>
            <person name="Luedi P."/>
            <person name="Oefner P.J."/>
            <person name="David L."/>
            <person name="Dietrich F.S."/>
            <person name="Li Y."/>
            <person name="Davis R.W."/>
            <person name="Steinmetz L.M."/>
        </authorList>
    </citation>
    <scope>NUCLEOTIDE SEQUENCE [LARGE SCALE GENOMIC DNA]</scope>
    <source>
        <strain>YJM789</strain>
    </source>
</reference>
<dbReference type="EC" id="3.4.24.-"/>
<dbReference type="EMBL" id="AAFW02000067">
    <property type="protein sequence ID" value="EDN62826.1"/>
    <property type="molecule type" value="Genomic_DNA"/>
</dbReference>
<dbReference type="SMR" id="A6ZS94"/>
<dbReference type="HOGENOM" id="CLU_079125_0_0_1"/>
<dbReference type="Proteomes" id="UP000007060">
    <property type="component" value="Unassembled WGS sequence"/>
</dbReference>
<dbReference type="GO" id="GO:0005743">
    <property type="term" value="C:mitochondrial inner membrane"/>
    <property type="evidence" value="ECO:0007669"/>
    <property type="project" value="UniProtKB-SubCell"/>
</dbReference>
<dbReference type="GO" id="GO:0046872">
    <property type="term" value="F:metal ion binding"/>
    <property type="evidence" value="ECO:0007669"/>
    <property type="project" value="UniProtKB-KW"/>
</dbReference>
<dbReference type="GO" id="GO:0004222">
    <property type="term" value="F:metalloendopeptidase activity"/>
    <property type="evidence" value="ECO:0007669"/>
    <property type="project" value="InterPro"/>
</dbReference>
<dbReference type="GO" id="GO:0034982">
    <property type="term" value="P:mitochondrial protein processing"/>
    <property type="evidence" value="ECO:0007669"/>
    <property type="project" value="TreeGrafter"/>
</dbReference>
<dbReference type="GO" id="GO:0033615">
    <property type="term" value="P:mitochondrial proton-transporting ATP synthase complex assembly"/>
    <property type="evidence" value="ECO:0007669"/>
    <property type="project" value="TreeGrafter"/>
</dbReference>
<dbReference type="InterPro" id="IPR019165">
    <property type="entry name" value="Peptidase_M76_ATP23"/>
</dbReference>
<dbReference type="PANTHER" id="PTHR21711">
    <property type="entry name" value="MITOCHONDRIAL INNER MEMBRANE PROTEASE"/>
    <property type="match status" value="1"/>
</dbReference>
<dbReference type="PANTHER" id="PTHR21711:SF0">
    <property type="entry name" value="MITOCHONDRIAL INNER MEMBRANE PROTEASE ATP23 HOMOLOG"/>
    <property type="match status" value="1"/>
</dbReference>
<dbReference type="Pfam" id="PF09768">
    <property type="entry name" value="Peptidase_M76"/>
    <property type="match status" value="1"/>
</dbReference>
<dbReference type="PROSITE" id="PS00142">
    <property type="entry name" value="ZINC_PROTEASE"/>
    <property type="match status" value="1"/>
</dbReference>
<keyword id="KW-0378">Hydrolase</keyword>
<keyword id="KW-0472">Membrane</keyword>
<keyword id="KW-0479">Metal-binding</keyword>
<keyword id="KW-0482">Metalloprotease</keyword>
<keyword id="KW-0496">Mitochondrion</keyword>
<keyword id="KW-0999">Mitochondrion inner membrane</keyword>
<keyword id="KW-0645">Protease</keyword>
<evidence type="ECO:0000250" key="1"/>
<evidence type="ECO:0000255" key="2">
    <source>
        <dbReference type="PROSITE-ProRule" id="PRU10095"/>
    </source>
</evidence>
<evidence type="ECO:0000305" key="3"/>
<name>ATP23_YEAS7</name>
<gene>
    <name type="primary">ATP23</name>
    <name type="ORF">SCY_4805</name>
</gene>
<proteinExistence type="inferred from homology"/>
<protein>
    <recommendedName>
        <fullName>Mitochondrial inner membrane protease ATP23</fullName>
        <ecNumber>3.4.24.-</ecNumber>
    </recommendedName>
</protein>
<sequence length="227" mass="26890">MNSSGDNAGFEWWRRTMQYKTGIGLTPEEKTRYEDDSKARELKKECLKCYEYRDWMLKYSPTVRFMVQAITKLNKGSDSKFDDSKIICDYCPDWKGGGFHPELGILLCQNRLRDKWHLEDTLSHELIHYFDDLKWQIDWLNLKHHACSEIRASSLSGECRFWEEFKRRGFRTGFHVARGHQDCVRRRAIISVSGNPNCQSKEHAAKIVDEVWDSCFADTRPFDEIYR</sequence>
<comment type="function">
    <text evidence="1">Has a dual role in the assembly of mitochondrial ATPase. Acts as a protease that removes the N-terminal 10 residues of mitochondrial ATPase CF(0) subunit 6 (ATP6) at the intermembrane space side. Also involved in the correct assembly of the membrane-embedded ATPase CF(0) particle, probably mediating association of ATP6 with the subunit 9 ring (By similarity).</text>
</comment>
<comment type="subunit">
    <text evidence="1">Interacts with ATP6.</text>
</comment>
<comment type="subcellular location">
    <subcellularLocation>
        <location>Mitochondrion inner membrane</location>
        <topology>Peripheral membrane protein</topology>
        <orientation>Intermembrane side</orientation>
    </subcellularLocation>
    <text evidence="1">Associates loosely with the inner membrane.</text>
</comment>
<comment type="similarity">
    <text evidence="3">Belongs to the peptidase M76 family.</text>
</comment>
<accession>A6ZS94</accession>